<feature type="chain" id="PRO_0000318395" description="Protein translocase subunit SecA 2">
    <location>
        <begin position="1"/>
        <end position="850"/>
    </location>
</feature>
<feature type="binding site" evidence="1">
    <location>
        <position position="83"/>
    </location>
    <ligand>
        <name>ATP</name>
        <dbReference type="ChEBI" id="CHEBI:30616"/>
    </ligand>
</feature>
<feature type="binding site" evidence="1">
    <location>
        <begin position="101"/>
        <end position="105"/>
    </location>
    <ligand>
        <name>ATP</name>
        <dbReference type="ChEBI" id="CHEBI:30616"/>
    </ligand>
</feature>
<feature type="binding site" evidence="1">
    <location>
        <position position="491"/>
    </location>
    <ligand>
        <name>ATP</name>
        <dbReference type="ChEBI" id="CHEBI:30616"/>
    </ligand>
</feature>
<organism>
    <name type="scientific">Mycolicibacterium vanbaalenii (strain DSM 7251 / JCM 13017 / BCRC 16820 / KCTC 9966 / NRRL B-24157 / PYR-1)</name>
    <name type="common">Mycobacterium vanbaalenii</name>
    <dbReference type="NCBI Taxonomy" id="350058"/>
    <lineage>
        <taxon>Bacteria</taxon>
        <taxon>Bacillati</taxon>
        <taxon>Actinomycetota</taxon>
        <taxon>Actinomycetes</taxon>
        <taxon>Mycobacteriales</taxon>
        <taxon>Mycobacteriaceae</taxon>
        <taxon>Mycolicibacterium</taxon>
    </lineage>
</organism>
<evidence type="ECO:0000255" key="1">
    <source>
        <dbReference type="HAMAP-Rule" id="MF_01382"/>
    </source>
</evidence>
<sequence>MLADVLRLGEARTVKQLSAIADHVDSLARGVENLTDAELSSRTDVFRRRVADGDVLDELLPEGFAVAREAAWRVLGLRPYHVQVMGGAALHFGNIAEMMTGEGKTLACVMPAYLNAIGGKGVHIVTVNDYLAGRDAEQMGRVHRFLGLTVGVILSEMKPDERRAAYAADITYGTNNEFGFDYLRDNMAGRLEDRVQRGHCYAIVDEVDSILIDEARTPMIISGPADDATRWYAEFARLAALMTRDVHYEVDTRRRTIGVSEAGVALVEDQLGVDNLYQVVHAPLVGHLNNAVRAKELFHRDREYIVNDDGEVLIVDEFTGRVLVGRRYNEGLHQAIEAKEGVEVKPENQTLATITLQNYFRLYDRLAGMTGTARSEASEFRDIYRLGVITIPPNRPVVRRDEVDVVYKTESAKFDAVVEDVVGRHAAGQPVLIGTTSVEKSEYLSGRLTERRVPHTVLNAKHLEQEAAIVAEGGRRGAVTVATDMAGRGTDIMLGGNVDFLTDKRLRSRGLHPTRSPEEYDAAWAEVRREVAAESRTEAREVVALGGLYVLGTERHESRRIDNQLRGRSGRQGDPGETRFYVSLCDELMRRSATFDLEKLMSRLKMPEREPIEAKVVSRAIRNAQSQVEQANFDMRRSVVKYGQVLDQQRRIVYQARSRLLEGEDMQHQIFHMIGDVVTAYVNECTAGRRTADWDLETLRAALSTLYPVVWQPDPRPHMRGLTRSVLRHEVIADARRALVRRKAAIEARSGLRVMRELERAILLDCLDSKWRAHLYEMDYLAAGIGMRALAGADPVVEYHREGHRMFVRMLEAVKEQSIRSLFDATTRMLAPIMPSAARSPGTPDPRWPF</sequence>
<dbReference type="EC" id="7.4.2.8" evidence="1"/>
<dbReference type="EMBL" id="CP000511">
    <property type="protein sequence ID" value="ABM12427.1"/>
    <property type="molecule type" value="Genomic_DNA"/>
</dbReference>
<dbReference type="RefSeq" id="WP_011778852.1">
    <property type="nucleotide sequence ID" value="NC_008726.1"/>
</dbReference>
<dbReference type="SMR" id="A1T5H7"/>
<dbReference type="STRING" id="350058.Mvan_1598"/>
<dbReference type="KEGG" id="mva:Mvan_1598"/>
<dbReference type="eggNOG" id="COG0653">
    <property type="taxonomic scope" value="Bacteria"/>
</dbReference>
<dbReference type="HOGENOM" id="CLU_005314_3_2_11"/>
<dbReference type="Proteomes" id="UP000009159">
    <property type="component" value="Chromosome"/>
</dbReference>
<dbReference type="GO" id="GO:0031522">
    <property type="term" value="C:cell envelope Sec protein transport complex"/>
    <property type="evidence" value="ECO:0007669"/>
    <property type="project" value="TreeGrafter"/>
</dbReference>
<dbReference type="GO" id="GO:0005829">
    <property type="term" value="C:cytosol"/>
    <property type="evidence" value="ECO:0007669"/>
    <property type="project" value="TreeGrafter"/>
</dbReference>
<dbReference type="GO" id="GO:0005886">
    <property type="term" value="C:plasma membrane"/>
    <property type="evidence" value="ECO:0007669"/>
    <property type="project" value="UniProtKB-SubCell"/>
</dbReference>
<dbReference type="GO" id="GO:0005524">
    <property type="term" value="F:ATP binding"/>
    <property type="evidence" value="ECO:0007669"/>
    <property type="project" value="UniProtKB-UniRule"/>
</dbReference>
<dbReference type="GO" id="GO:0008564">
    <property type="term" value="F:protein-exporting ATPase activity"/>
    <property type="evidence" value="ECO:0007669"/>
    <property type="project" value="UniProtKB-EC"/>
</dbReference>
<dbReference type="GO" id="GO:0065002">
    <property type="term" value="P:intracellular protein transmembrane transport"/>
    <property type="evidence" value="ECO:0007669"/>
    <property type="project" value="UniProtKB-UniRule"/>
</dbReference>
<dbReference type="GO" id="GO:0017038">
    <property type="term" value="P:protein import"/>
    <property type="evidence" value="ECO:0007669"/>
    <property type="project" value="InterPro"/>
</dbReference>
<dbReference type="GO" id="GO:0006605">
    <property type="term" value="P:protein targeting"/>
    <property type="evidence" value="ECO:0007669"/>
    <property type="project" value="UniProtKB-UniRule"/>
</dbReference>
<dbReference type="GO" id="GO:0043952">
    <property type="term" value="P:protein transport by the Sec complex"/>
    <property type="evidence" value="ECO:0007669"/>
    <property type="project" value="TreeGrafter"/>
</dbReference>
<dbReference type="CDD" id="cd17928">
    <property type="entry name" value="DEXDc_SecA"/>
    <property type="match status" value="1"/>
</dbReference>
<dbReference type="CDD" id="cd18803">
    <property type="entry name" value="SF2_C_secA"/>
    <property type="match status" value="1"/>
</dbReference>
<dbReference type="FunFam" id="3.40.50.300:FF:000113">
    <property type="entry name" value="Preprotein translocase subunit SecA"/>
    <property type="match status" value="1"/>
</dbReference>
<dbReference type="FunFam" id="3.40.50.300:FF:000334">
    <property type="entry name" value="Protein translocase subunit SecA"/>
    <property type="match status" value="1"/>
</dbReference>
<dbReference type="FunFam" id="3.90.1440.10:FF:000002">
    <property type="entry name" value="Protein translocase subunit SecA"/>
    <property type="match status" value="1"/>
</dbReference>
<dbReference type="Gene3D" id="1.10.3060.10">
    <property type="entry name" value="Helical scaffold and wing domains of SecA"/>
    <property type="match status" value="1"/>
</dbReference>
<dbReference type="Gene3D" id="3.40.50.300">
    <property type="entry name" value="P-loop containing nucleotide triphosphate hydrolases"/>
    <property type="match status" value="2"/>
</dbReference>
<dbReference type="Gene3D" id="3.90.1440.10">
    <property type="entry name" value="SecA, preprotein cross-linking domain"/>
    <property type="match status" value="1"/>
</dbReference>
<dbReference type="HAMAP" id="MF_01382">
    <property type="entry name" value="SecA"/>
    <property type="match status" value="1"/>
</dbReference>
<dbReference type="InterPro" id="IPR014001">
    <property type="entry name" value="Helicase_ATP-bd"/>
</dbReference>
<dbReference type="InterPro" id="IPR001650">
    <property type="entry name" value="Helicase_C-like"/>
</dbReference>
<dbReference type="InterPro" id="IPR027417">
    <property type="entry name" value="P-loop_NTPase"/>
</dbReference>
<dbReference type="InterPro" id="IPR000185">
    <property type="entry name" value="SecA"/>
</dbReference>
<dbReference type="InterPro" id="IPR011115">
    <property type="entry name" value="SecA_DEAD"/>
</dbReference>
<dbReference type="InterPro" id="IPR014018">
    <property type="entry name" value="SecA_motor_DEAD"/>
</dbReference>
<dbReference type="InterPro" id="IPR011130">
    <property type="entry name" value="SecA_preprotein_X-link_dom"/>
</dbReference>
<dbReference type="InterPro" id="IPR044722">
    <property type="entry name" value="SecA_SF2_C"/>
</dbReference>
<dbReference type="InterPro" id="IPR011116">
    <property type="entry name" value="SecA_Wing/Scaffold"/>
</dbReference>
<dbReference type="InterPro" id="IPR036266">
    <property type="entry name" value="SecA_Wing/Scaffold_sf"/>
</dbReference>
<dbReference type="InterPro" id="IPR036670">
    <property type="entry name" value="SecA_X-link_sf"/>
</dbReference>
<dbReference type="NCBIfam" id="NF009538">
    <property type="entry name" value="PRK12904.1"/>
    <property type="match status" value="1"/>
</dbReference>
<dbReference type="NCBIfam" id="TIGR00963">
    <property type="entry name" value="secA"/>
    <property type="match status" value="1"/>
</dbReference>
<dbReference type="PANTHER" id="PTHR30612:SF0">
    <property type="entry name" value="CHLOROPLAST PROTEIN-TRANSPORTING ATPASE"/>
    <property type="match status" value="1"/>
</dbReference>
<dbReference type="PANTHER" id="PTHR30612">
    <property type="entry name" value="SECA INNER MEMBRANE COMPONENT OF SEC PROTEIN SECRETION SYSTEM"/>
    <property type="match status" value="1"/>
</dbReference>
<dbReference type="Pfam" id="PF21090">
    <property type="entry name" value="P-loop_SecA"/>
    <property type="match status" value="1"/>
</dbReference>
<dbReference type="Pfam" id="PF07517">
    <property type="entry name" value="SecA_DEAD"/>
    <property type="match status" value="1"/>
</dbReference>
<dbReference type="Pfam" id="PF01043">
    <property type="entry name" value="SecA_PP_bind"/>
    <property type="match status" value="1"/>
</dbReference>
<dbReference type="Pfam" id="PF07516">
    <property type="entry name" value="SecA_SW"/>
    <property type="match status" value="1"/>
</dbReference>
<dbReference type="PRINTS" id="PR00906">
    <property type="entry name" value="SECA"/>
</dbReference>
<dbReference type="SMART" id="SM00957">
    <property type="entry name" value="SecA_DEAD"/>
    <property type="match status" value="1"/>
</dbReference>
<dbReference type="SMART" id="SM00958">
    <property type="entry name" value="SecA_PP_bind"/>
    <property type="match status" value="1"/>
</dbReference>
<dbReference type="SUPFAM" id="SSF81886">
    <property type="entry name" value="Helical scaffold and wing domains of SecA"/>
    <property type="match status" value="1"/>
</dbReference>
<dbReference type="SUPFAM" id="SSF52540">
    <property type="entry name" value="P-loop containing nucleoside triphosphate hydrolases"/>
    <property type="match status" value="2"/>
</dbReference>
<dbReference type="SUPFAM" id="SSF81767">
    <property type="entry name" value="Pre-protein crosslinking domain of SecA"/>
    <property type="match status" value="1"/>
</dbReference>
<dbReference type="PROSITE" id="PS51196">
    <property type="entry name" value="SECA_MOTOR_DEAD"/>
    <property type="match status" value="1"/>
</dbReference>
<proteinExistence type="inferred from homology"/>
<reference key="1">
    <citation type="submission" date="2006-12" db="EMBL/GenBank/DDBJ databases">
        <title>Complete sequence of Mycobacterium vanbaalenii PYR-1.</title>
        <authorList>
            <consortium name="US DOE Joint Genome Institute"/>
            <person name="Copeland A."/>
            <person name="Lucas S."/>
            <person name="Lapidus A."/>
            <person name="Barry K."/>
            <person name="Detter J.C."/>
            <person name="Glavina del Rio T."/>
            <person name="Hammon N."/>
            <person name="Israni S."/>
            <person name="Dalin E."/>
            <person name="Tice H."/>
            <person name="Pitluck S."/>
            <person name="Singan V."/>
            <person name="Schmutz J."/>
            <person name="Larimer F."/>
            <person name="Land M."/>
            <person name="Hauser L."/>
            <person name="Kyrpides N."/>
            <person name="Anderson I.J."/>
            <person name="Miller C."/>
            <person name="Richardson P."/>
        </authorList>
    </citation>
    <scope>NUCLEOTIDE SEQUENCE [LARGE SCALE GENOMIC DNA]</scope>
    <source>
        <strain>DSM 7251 / JCM 13017 / BCRC 16820 / KCTC 9966 / NRRL B-24157 / PYR-1</strain>
    </source>
</reference>
<gene>
    <name evidence="1" type="primary">secA2</name>
    <name type="ordered locus">Mvan_1598</name>
</gene>
<accession>A1T5H7</accession>
<comment type="function">
    <text evidence="1">Part of the Sec protein translocase complex. Interacts with the SecYEG preprotein conducting channel. Has a central role in coupling the hydrolysis of ATP to the transfer of proteins into and across the cell membrane, serving as an ATP-driven molecular motor driving the stepwise translocation of polypeptide chains across the membrane.</text>
</comment>
<comment type="catalytic activity">
    <reaction evidence="1">
        <text>ATP + H2O + cellular proteinSide 1 = ADP + phosphate + cellular proteinSide 2.</text>
        <dbReference type="EC" id="7.4.2.8"/>
    </reaction>
</comment>
<comment type="subunit">
    <text evidence="1">Monomer and homodimer. Part of the essential Sec protein translocation apparatus which comprises SecA, SecYEG and auxiliary proteins SecDF. Other proteins may also be involved.</text>
</comment>
<comment type="subcellular location">
    <subcellularLocation>
        <location evidence="1">Cell membrane</location>
        <topology evidence="1">Peripheral membrane protein</topology>
        <orientation evidence="1">Cytoplasmic side</orientation>
    </subcellularLocation>
    <subcellularLocation>
        <location evidence="1">Cytoplasm</location>
    </subcellularLocation>
    <text evidence="1">Distribution is 50-50.</text>
</comment>
<comment type="similarity">
    <text evidence="1">Belongs to the SecA family.</text>
</comment>
<keyword id="KW-0067">ATP-binding</keyword>
<keyword id="KW-1003">Cell membrane</keyword>
<keyword id="KW-0963">Cytoplasm</keyword>
<keyword id="KW-0472">Membrane</keyword>
<keyword id="KW-0547">Nucleotide-binding</keyword>
<keyword id="KW-0653">Protein transport</keyword>
<keyword id="KW-1278">Translocase</keyword>
<keyword id="KW-0811">Translocation</keyword>
<keyword id="KW-0813">Transport</keyword>
<name>SECA2_MYCVP</name>
<protein>
    <recommendedName>
        <fullName evidence="1">Protein translocase subunit SecA 2</fullName>
        <ecNumber evidence="1">7.4.2.8</ecNumber>
    </recommendedName>
</protein>